<keyword id="KW-0067">ATP-binding</keyword>
<keyword id="KW-0173">Coenzyme A biosynthesis</keyword>
<keyword id="KW-0963">Cytoplasm</keyword>
<keyword id="KW-0418">Kinase</keyword>
<keyword id="KW-0479">Metal-binding</keyword>
<keyword id="KW-0547">Nucleotide-binding</keyword>
<keyword id="KW-0630">Potassium</keyword>
<keyword id="KW-0808">Transferase</keyword>
<comment type="function">
    <text evidence="1">Catalyzes the phosphorylation of pantothenate (Pan), the first step in CoA biosynthesis.</text>
</comment>
<comment type="catalytic activity">
    <reaction evidence="1">
        <text>(R)-pantothenate + ATP = (R)-4'-phosphopantothenate + ADP + H(+)</text>
        <dbReference type="Rhea" id="RHEA:16373"/>
        <dbReference type="ChEBI" id="CHEBI:10986"/>
        <dbReference type="ChEBI" id="CHEBI:15378"/>
        <dbReference type="ChEBI" id="CHEBI:29032"/>
        <dbReference type="ChEBI" id="CHEBI:30616"/>
        <dbReference type="ChEBI" id="CHEBI:456216"/>
        <dbReference type="EC" id="2.7.1.33"/>
    </reaction>
</comment>
<comment type="cofactor">
    <cofactor evidence="1">
        <name>NH4(+)</name>
        <dbReference type="ChEBI" id="CHEBI:28938"/>
    </cofactor>
    <cofactor evidence="1">
        <name>K(+)</name>
        <dbReference type="ChEBI" id="CHEBI:29103"/>
    </cofactor>
    <text evidence="1">A monovalent cation. Ammonium or potassium.</text>
</comment>
<comment type="pathway">
    <text evidence="1">Cofactor biosynthesis; coenzyme A biosynthesis; CoA from (R)-pantothenate: step 1/5.</text>
</comment>
<comment type="subunit">
    <text evidence="1">Homodimer.</text>
</comment>
<comment type="subcellular location">
    <subcellularLocation>
        <location evidence="1">Cytoplasm</location>
    </subcellularLocation>
</comment>
<comment type="similarity">
    <text evidence="1">Belongs to the type III pantothenate kinase family.</text>
</comment>
<dbReference type="EC" id="2.7.1.33" evidence="1"/>
<dbReference type="EMBL" id="CP000350">
    <property type="protein sequence ID" value="ABJ75191.1"/>
    <property type="molecule type" value="Genomic_DNA"/>
</dbReference>
<dbReference type="RefSeq" id="WP_002723032.1">
    <property type="nucleotide sequence ID" value="NC_008510.1"/>
</dbReference>
<dbReference type="SMR" id="Q04V79"/>
<dbReference type="KEGG" id="lbj:LBJ_0491"/>
<dbReference type="HOGENOM" id="CLU_066627_1_0_12"/>
<dbReference type="UniPathway" id="UPA00241">
    <property type="reaction ID" value="UER00352"/>
</dbReference>
<dbReference type="Proteomes" id="UP000000656">
    <property type="component" value="Chromosome 1"/>
</dbReference>
<dbReference type="GO" id="GO:0005737">
    <property type="term" value="C:cytoplasm"/>
    <property type="evidence" value="ECO:0007669"/>
    <property type="project" value="UniProtKB-SubCell"/>
</dbReference>
<dbReference type="GO" id="GO:0005524">
    <property type="term" value="F:ATP binding"/>
    <property type="evidence" value="ECO:0007669"/>
    <property type="project" value="UniProtKB-UniRule"/>
</dbReference>
<dbReference type="GO" id="GO:0046872">
    <property type="term" value="F:metal ion binding"/>
    <property type="evidence" value="ECO:0007669"/>
    <property type="project" value="UniProtKB-KW"/>
</dbReference>
<dbReference type="GO" id="GO:0004594">
    <property type="term" value="F:pantothenate kinase activity"/>
    <property type="evidence" value="ECO:0007669"/>
    <property type="project" value="UniProtKB-UniRule"/>
</dbReference>
<dbReference type="GO" id="GO:0015937">
    <property type="term" value="P:coenzyme A biosynthetic process"/>
    <property type="evidence" value="ECO:0007669"/>
    <property type="project" value="UniProtKB-UniRule"/>
</dbReference>
<dbReference type="CDD" id="cd24015">
    <property type="entry name" value="ASKHA_NBD_PanK-III"/>
    <property type="match status" value="1"/>
</dbReference>
<dbReference type="Gene3D" id="3.30.420.40">
    <property type="match status" value="2"/>
</dbReference>
<dbReference type="HAMAP" id="MF_01274">
    <property type="entry name" value="Pantothen_kinase_3"/>
    <property type="match status" value="1"/>
</dbReference>
<dbReference type="InterPro" id="IPR043129">
    <property type="entry name" value="ATPase_NBD"/>
</dbReference>
<dbReference type="InterPro" id="IPR004619">
    <property type="entry name" value="Type_III_PanK"/>
</dbReference>
<dbReference type="NCBIfam" id="TIGR00671">
    <property type="entry name" value="baf"/>
    <property type="match status" value="1"/>
</dbReference>
<dbReference type="NCBIfam" id="NF009848">
    <property type="entry name" value="PRK13318.1-6"/>
    <property type="match status" value="1"/>
</dbReference>
<dbReference type="NCBIfam" id="NF009855">
    <property type="entry name" value="PRK13321.1"/>
    <property type="match status" value="1"/>
</dbReference>
<dbReference type="PANTHER" id="PTHR34265">
    <property type="entry name" value="TYPE III PANTOTHENATE KINASE"/>
    <property type="match status" value="1"/>
</dbReference>
<dbReference type="PANTHER" id="PTHR34265:SF1">
    <property type="entry name" value="TYPE III PANTOTHENATE KINASE"/>
    <property type="match status" value="1"/>
</dbReference>
<dbReference type="Pfam" id="PF03309">
    <property type="entry name" value="Pan_kinase"/>
    <property type="match status" value="1"/>
</dbReference>
<dbReference type="SUPFAM" id="SSF53067">
    <property type="entry name" value="Actin-like ATPase domain"/>
    <property type="match status" value="2"/>
</dbReference>
<gene>
    <name evidence="1" type="primary">coaX</name>
    <name type="ordered locus">LBJ_0491</name>
</gene>
<name>COAX_LEPBJ</name>
<protein>
    <recommendedName>
        <fullName evidence="1">Type III pantothenate kinase</fullName>
        <ecNumber evidence="1">2.7.1.33</ecNumber>
    </recommendedName>
    <alternativeName>
        <fullName evidence="1">PanK-III</fullName>
    </alternativeName>
    <alternativeName>
        <fullName evidence="1">Pantothenic acid kinase</fullName>
    </alternativeName>
</protein>
<proteinExistence type="inferred from homology"/>
<reference key="1">
    <citation type="journal article" date="2006" name="Proc. Natl. Acad. Sci. U.S.A.">
        <title>Genome reduction in Leptospira borgpetersenii reflects limited transmission potential.</title>
        <authorList>
            <person name="Bulach D.M."/>
            <person name="Zuerner R.L."/>
            <person name="Wilson P."/>
            <person name="Seemann T."/>
            <person name="McGrath A."/>
            <person name="Cullen P.A."/>
            <person name="Davis J."/>
            <person name="Johnson M."/>
            <person name="Kuczek E."/>
            <person name="Alt D.P."/>
            <person name="Peterson-Burch B."/>
            <person name="Coppel R.L."/>
            <person name="Rood J.I."/>
            <person name="Davies J.K."/>
            <person name="Adler B."/>
        </authorList>
    </citation>
    <scope>NUCLEOTIDE SEQUENCE [LARGE SCALE GENOMIC DNA]</scope>
    <source>
        <strain>JB197</strain>
    </source>
</reference>
<accession>Q04V79</accession>
<organism>
    <name type="scientific">Leptospira borgpetersenii serovar Hardjo-bovis (strain JB197)</name>
    <dbReference type="NCBI Taxonomy" id="355277"/>
    <lineage>
        <taxon>Bacteria</taxon>
        <taxon>Pseudomonadati</taxon>
        <taxon>Spirochaetota</taxon>
        <taxon>Spirochaetia</taxon>
        <taxon>Leptospirales</taxon>
        <taxon>Leptospiraceae</taxon>
        <taxon>Leptospira</taxon>
    </lineage>
</organism>
<evidence type="ECO:0000255" key="1">
    <source>
        <dbReference type="HAMAP-Rule" id="MF_01274"/>
    </source>
</evidence>
<feature type="chain" id="PRO_1000054383" description="Type III pantothenate kinase">
    <location>
        <begin position="1"/>
        <end position="257"/>
    </location>
</feature>
<feature type="active site" description="Proton acceptor" evidence="1">
    <location>
        <position position="111"/>
    </location>
</feature>
<feature type="binding site" evidence="1">
    <location>
        <begin position="6"/>
        <end position="13"/>
    </location>
    <ligand>
        <name>ATP</name>
        <dbReference type="ChEBI" id="CHEBI:30616"/>
    </ligand>
</feature>
<feature type="binding site" evidence="1">
    <location>
        <position position="102"/>
    </location>
    <ligand>
        <name>substrate</name>
    </ligand>
</feature>
<feature type="binding site" evidence="1">
    <location>
        <begin position="109"/>
        <end position="112"/>
    </location>
    <ligand>
        <name>substrate</name>
    </ligand>
</feature>
<feature type="binding site" evidence="1">
    <location>
        <position position="131"/>
    </location>
    <ligand>
        <name>K(+)</name>
        <dbReference type="ChEBI" id="CHEBI:29103"/>
    </ligand>
</feature>
<feature type="binding site" evidence="1">
    <location>
        <position position="134"/>
    </location>
    <ligand>
        <name>ATP</name>
        <dbReference type="ChEBI" id="CHEBI:30616"/>
    </ligand>
</feature>
<feature type="binding site" evidence="1">
    <location>
        <position position="186"/>
    </location>
    <ligand>
        <name>substrate</name>
    </ligand>
</feature>
<sequence>MLLVVDVGNTNTVFGIFENGKNVPLFHKRTVTRKDRTSDELGLFFRGFLREFKIENEAITGGIYSSVVPTLNPILERMFQDWFKIEAIRVHYQMKLPFSISYPRPYEIGADRLVNAAACVIDSPGKFIIIDLGTATTFCVVSEKPEYLGGVIAPGLKVSMDALTRNTSQLPPIVFQSPEKILGDSTIESIQAGFFFGWIGLLEGIIREIKKDKGQDYRVIGTGGLVTVIDAAHPGIFDKIDPLLTLRGLQILHQMNS</sequence>